<proteinExistence type="inferred from homology"/>
<protein>
    <recommendedName>
        <fullName>Mediator of RNA polymerase II transcription subunit 3</fullName>
    </recommendedName>
    <alternativeName>
        <fullName>Mediator complex subunit 3</fullName>
    </alternativeName>
</protein>
<sequence length="481" mass="52084">MATKQEEQANLSDVLTPSMSLTELEMKFADETDGKAKDVVQARIKKAEDGILPLRLQFNDFTQIMSSLDEERYANVSKQEKFQMIRSKVLGLTERLQELSNDFEELQPLFATVGEYSKTYKNKNFQVLENLASYNHRGKAGASISNSTPTPAAATPTTAPTPGAGTKKAAKTAPTPTATATIGTPSNNAPTPATTATTPGTQAKKPRKPRQTKKQQQAAAAAAAVAQAQAQAQAQAQNQNQNNMQNKNISNPGMNSNMGTPVMGNPNMKQMQSPIPANAMNNMNVPHNGAMRPSVPNGNMGNPSMGNLNMNAPNMGNPNMNNPNMNNPNAMMSPMAGQGQLNQMFPMQNHNQNGQFMGQQSPGPNIGQMQFPPNNGNMNGMPGTSDMNLGMNPSMNMNMGMNLNQITPANILSMNTKGKDDQMQNIGMDQNQNQNQSQNQSQNQNQSMNMNMNNDSNNPKSAYDLVDFNSLDLSSLNMDFL</sequence>
<dbReference type="EMBL" id="CR380947">
    <property type="protein sequence ID" value="CAG57721.1"/>
    <property type="molecule type" value="Genomic_DNA"/>
</dbReference>
<dbReference type="RefSeq" id="XP_444828.1">
    <property type="nucleotide sequence ID" value="XM_444828.1"/>
</dbReference>
<dbReference type="SMR" id="Q6FXZ4"/>
<dbReference type="STRING" id="284593.Q6FXZ4"/>
<dbReference type="EnsemblFungi" id="CAGL0A01408g-T">
    <property type="protein sequence ID" value="CAGL0A01408g-T-p1"/>
    <property type="gene ID" value="CAGL0A01408g"/>
</dbReference>
<dbReference type="KEGG" id="cgr:2886469"/>
<dbReference type="CGD" id="CAL0126757">
    <property type="gene designation" value="CAGL0A01408g"/>
</dbReference>
<dbReference type="VEuPathDB" id="FungiDB:CAGL0A01408g"/>
<dbReference type="eggNOG" id="ENOG502S3GT">
    <property type="taxonomic scope" value="Eukaryota"/>
</dbReference>
<dbReference type="HOGENOM" id="CLU_049224_0_0_1"/>
<dbReference type="InParanoid" id="Q6FXZ4"/>
<dbReference type="OMA" id="FIQIMAN"/>
<dbReference type="Proteomes" id="UP000002428">
    <property type="component" value="Chromosome A"/>
</dbReference>
<dbReference type="GO" id="GO:0016592">
    <property type="term" value="C:mediator complex"/>
    <property type="evidence" value="ECO:0007669"/>
    <property type="project" value="InterPro"/>
</dbReference>
<dbReference type="GO" id="GO:0003712">
    <property type="term" value="F:transcription coregulator activity"/>
    <property type="evidence" value="ECO:0007669"/>
    <property type="project" value="InterPro"/>
</dbReference>
<dbReference type="GO" id="GO:0006357">
    <property type="term" value="P:regulation of transcription by RNA polymerase II"/>
    <property type="evidence" value="ECO:0007669"/>
    <property type="project" value="InterPro"/>
</dbReference>
<dbReference type="InterPro" id="IPR020998">
    <property type="entry name" value="Med3"/>
</dbReference>
<dbReference type="Pfam" id="PF11593">
    <property type="entry name" value="Med3"/>
    <property type="match status" value="1"/>
</dbReference>
<evidence type="ECO:0000250" key="1"/>
<evidence type="ECO:0000255" key="2"/>
<evidence type="ECO:0000256" key="3">
    <source>
        <dbReference type="SAM" id="MobiDB-lite"/>
    </source>
</evidence>
<evidence type="ECO:0000305" key="4"/>
<gene>
    <name type="primary">PGD1</name>
    <name type="synonym">MED3</name>
    <name type="ordered locus">CAGL0A01408g</name>
</gene>
<feature type="chain" id="PRO_0000302017" description="Mediator of RNA polymerase II transcription subunit 3">
    <location>
        <begin position="1"/>
        <end position="481"/>
    </location>
</feature>
<feature type="region of interest" description="Disordered" evidence="3">
    <location>
        <begin position="140"/>
        <end position="261"/>
    </location>
</feature>
<feature type="region of interest" description="Disordered" evidence="3">
    <location>
        <begin position="415"/>
        <end position="463"/>
    </location>
</feature>
<feature type="coiled-coil region" evidence="2">
    <location>
        <begin position="79"/>
        <end position="107"/>
    </location>
</feature>
<feature type="compositionally biased region" description="Low complexity" evidence="3">
    <location>
        <begin position="148"/>
        <end position="203"/>
    </location>
</feature>
<feature type="compositionally biased region" description="Basic residues" evidence="3">
    <location>
        <begin position="204"/>
        <end position="213"/>
    </location>
</feature>
<feature type="compositionally biased region" description="Low complexity" evidence="3">
    <location>
        <begin position="214"/>
        <end position="248"/>
    </location>
</feature>
<feature type="compositionally biased region" description="Polar residues" evidence="3">
    <location>
        <begin position="249"/>
        <end position="259"/>
    </location>
</feature>
<feature type="compositionally biased region" description="Low complexity" evidence="3">
    <location>
        <begin position="428"/>
        <end position="458"/>
    </location>
</feature>
<reference key="1">
    <citation type="journal article" date="2004" name="Nature">
        <title>Genome evolution in yeasts.</title>
        <authorList>
            <person name="Dujon B."/>
            <person name="Sherman D."/>
            <person name="Fischer G."/>
            <person name="Durrens P."/>
            <person name="Casaregola S."/>
            <person name="Lafontaine I."/>
            <person name="de Montigny J."/>
            <person name="Marck C."/>
            <person name="Neuveglise C."/>
            <person name="Talla E."/>
            <person name="Goffard N."/>
            <person name="Frangeul L."/>
            <person name="Aigle M."/>
            <person name="Anthouard V."/>
            <person name="Babour A."/>
            <person name="Barbe V."/>
            <person name="Barnay S."/>
            <person name="Blanchin S."/>
            <person name="Beckerich J.-M."/>
            <person name="Beyne E."/>
            <person name="Bleykasten C."/>
            <person name="Boisrame A."/>
            <person name="Boyer J."/>
            <person name="Cattolico L."/>
            <person name="Confanioleri F."/>
            <person name="de Daruvar A."/>
            <person name="Despons L."/>
            <person name="Fabre E."/>
            <person name="Fairhead C."/>
            <person name="Ferry-Dumazet H."/>
            <person name="Groppi A."/>
            <person name="Hantraye F."/>
            <person name="Hennequin C."/>
            <person name="Jauniaux N."/>
            <person name="Joyet P."/>
            <person name="Kachouri R."/>
            <person name="Kerrest A."/>
            <person name="Koszul R."/>
            <person name="Lemaire M."/>
            <person name="Lesur I."/>
            <person name="Ma L."/>
            <person name="Muller H."/>
            <person name="Nicaud J.-M."/>
            <person name="Nikolski M."/>
            <person name="Oztas S."/>
            <person name="Ozier-Kalogeropoulos O."/>
            <person name="Pellenz S."/>
            <person name="Potier S."/>
            <person name="Richard G.-F."/>
            <person name="Straub M.-L."/>
            <person name="Suleau A."/>
            <person name="Swennen D."/>
            <person name="Tekaia F."/>
            <person name="Wesolowski-Louvel M."/>
            <person name="Westhof E."/>
            <person name="Wirth B."/>
            <person name="Zeniou-Meyer M."/>
            <person name="Zivanovic Y."/>
            <person name="Bolotin-Fukuhara M."/>
            <person name="Thierry A."/>
            <person name="Bouchier C."/>
            <person name="Caudron B."/>
            <person name="Scarpelli C."/>
            <person name="Gaillardin C."/>
            <person name="Weissenbach J."/>
            <person name="Wincker P."/>
            <person name="Souciet J.-L."/>
        </authorList>
    </citation>
    <scope>NUCLEOTIDE SEQUENCE [LARGE SCALE GENOMIC DNA]</scope>
    <source>
        <strain>ATCC 2001 / BCRC 20586 / JCM 3761 / NBRC 0622 / NRRL Y-65 / CBS 138</strain>
    </source>
</reference>
<accession>Q6FXZ4</accession>
<name>MED3_CANGA</name>
<keyword id="KW-0010">Activator</keyword>
<keyword id="KW-0175">Coiled coil</keyword>
<keyword id="KW-0539">Nucleus</keyword>
<keyword id="KW-1185">Reference proteome</keyword>
<keyword id="KW-0804">Transcription</keyword>
<keyword id="KW-0805">Transcription regulation</keyword>
<organism>
    <name type="scientific">Candida glabrata (strain ATCC 2001 / BCRC 20586 / JCM 3761 / NBRC 0622 / NRRL Y-65 / CBS 138)</name>
    <name type="common">Yeast</name>
    <name type="synonym">Nakaseomyces glabratus</name>
    <dbReference type="NCBI Taxonomy" id="284593"/>
    <lineage>
        <taxon>Eukaryota</taxon>
        <taxon>Fungi</taxon>
        <taxon>Dikarya</taxon>
        <taxon>Ascomycota</taxon>
        <taxon>Saccharomycotina</taxon>
        <taxon>Saccharomycetes</taxon>
        <taxon>Saccharomycetales</taxon>
        <taxon>Saccharomycetaceae</taxon>
        <taxon>Nakaseomyces</taxon>
    </lineage>
</organism>
<comment type="function">
    <text evidence="1">Component of the Mediator complex, a coactivator involved in regulated gene transcription of nearly all RNA polymerase II-dependent genes. Mediator functions as a bridge to convey information from gene-specific regulatory proteins to the basal RNA polymerase II transcription machinery. Mediator is recruited to promoters by direct interactions with regulatory proteins and serves as a scaffold for the assembly of a functional preinitiation complex with RNA polymerase II and the general transcription factors (By similarity).</text>
</comment>
<comment type="subunit">
    <text evidence="1">Component of the Mediator complex.</text>
</comment>
<comment type="subcellular location">
    <subcellularLocation>
        <location evidence="1">Nucleus</location>
    </subcellularLocation>
</comment>
<comment type="similarity">
    <text evidence="4">Belongs to the Mediator complex subunit 3 family.</text>
</comment>